<gene>
    <name evidence="1" type="primary">argH</name>
    <name type="ordered locus">Sala_0201</name>
</gene>
<evidence type="ECO:0000255" key="1">
    <source>
        <dbReference type="HAMAP-Rule" id="MF_00006"/>
    </source>
</evidence>
<proteinExistence type="inferred from homology"/>
<feature type="chain" id="PRO_0000321455" description="Argininosuccinate lyase">
    <location>
        <begin position="1"/>
        <end position="468"/>
    </location>
</feature>
<name>ARLY_SPHAL</name>
<reference key="1">
    <citation type="journal article" date="2009" name="Proc. Natl. Acad. Sci. U.S.A.">
        <title>The genomic basis of trophic strategy in marine bacteria.</title>
        <authorList>
            <person name="Lauro F.M."/>
            <person name="McDougald D."/>
            <person name="Thomas T."/>
            <person name="Williams T.J."/>
            <person name="Egan S."/>
            <person name="Rice S."/>
            <person name="DeMaere M.Z."/>
            <person name="Ting L."/>
            <person name="Ertan H."/>
            <person name="Johnson J."/>
            <person name="Ferriera S."/>
            <person name="Lapidus A."/>
            <person name="Anderson I."/>
            <person name="Kyrpides N."/>
            <person name="Munk A.C."/>
            <person name="Detter C."/>
            <person name="Han C.S."/>
            <person name="Brown M.V."/>
            <person name="Robb F.T."/>
            <person name="Kjelleberg S."/>
            <person name="Cavicchioli R."/>
        </authorList>
    </citation>
    <scope>NUCLEOTIDE SEQUENCE [LARGE SCALE GENOMIC DNA]</scope>
    <source>
        <strain>DSM 13593 / LMG 18877 / RB2256</strain>
    </source>
</reference>
<accession>Q1GWP7</accession>
<keyword id="KW-0028">Amino-acid biosynthesis</keyword>
<keyword id="KW-0055">Arginine biosynthesis</keyword>
<keyword id="KW-0963">Cytoplasm</keyword>
<keyword id="KW-0456">Lyase</keyword>
<keyword id="KW-1185">Reference proteome</keyword>
<comment type="catalytic activity">
    <reaction evidence="1">
        <text>2-(N(omega)-L-arginino)succinate = fumarate + L-arginine</text>
        <dbReference type="Rhea" id="RHEA:24020"/>
        <dbReference type="ChEBI" id="CHEBI:29806"/>
        <dbReference type="ChEBI" id="CHEBI:32682"/>
        <dbReference type="ChEBI" id="CHEBI:57472"/>
        <dbReference type="EC" id="4.3.2.1"/>
    </reaction>
</comment>
<comment type="pathway">
    <text evidence="1">Amino-acid biosynthesis; L-arginine biosynthesis; L-arginine from L-ornithine and carbamoyl phosphate: step 3/3.</text>
</comment>
<comment type="subcellular location">
    <subcellularLocation>
        <location evidence="1">Cytoplasm</location>
    </subcellularLocation>
</comment>
<comment type="similarity">
    <text evidence="1">Belongs to the lyase 1 family. Argininosuccinate lyase subfamily.</text>
</comment>
<dbReference type="EC" id="4.3.2.1" evidence="1"/>
<dbReference type="EMBL" id="CP000356">
    <property type="protein sequence ID" value="ABF51925.1"/>
    <property type="molecule type" value="Genomic_DNA"/>
</dbReference>
<dbReference type="SMR" id="Q1GWP7"/>
<dbReference type="STRING" id="317655.Sala_0201"/>
<dbReference type="KEGG" id="sal:Sala_0201"/>
<dbReference type="eggNOG" id="COG0165">
    <property type="taxonomic scope" value="Bacteria"/>
</dbReference>
<dbReference type="HOGENOM" id="CLU_027272_2_3_5"/>
<dbReference type="UniPathway" id="UPA00068">
    <property type="reaction ID" value="UER00114"/>
</dbReference>
<dbReference type="Proteomes" id="UP000006578">
    <property type="component" value="Chromosome"/>
</dbReference>
<dbReference type="GO" id="GO:0005829">
    <property type="term" value="C:cytosol"/>
    <property type="evidence" value="ECO:0007669"/>
    <property type="project" value="TreeGrafter"/>
</dbReference>
<dbReference type="GO" id="GO:0004056">
    <property type="term" value="F:argininosuccinate lyase activity"/>
    <property type="evidence" value="ECO:0007669"/>
    <property type="project" value="UniProtKB-UniRule"/>
</dbReference>
<dbReference type="GO" id="GO:0042450">
    <property type="term" value="P:arginine biosynthetic process via ornithine"/>
    <property type="evidence" value="ECO:0007669"/>
    <property type="project" value="InterPro"/>
</dbReference>
<dbReference type="GO" id="GO:0006526">
    <property type="term" value="P:L-arginine biosynthetic process"/>
    <property type="evidence" value="ECO:0007669"/>
    <property type="project" value="UniProtKB-UniRule"/>
</dbReference>
<dbReference type="CDD" id="cd01359">
    <property type="entry name" value="Argininosuccinate_lyase"/>
    <property type="match status" value="1"/>
</dbReference>
<dbReference type="FunFam" id="1.10.275.10:FF:000002">
    <property type="entry name" value="Argininosuccinate lyase"/>
    <property type="match status" value="1"/>
</dbReference>
<dbReference type="FunFam" id="1.10.40.30:FF:000001">
    <property type="entry name" value="Argininosuccinate lyase"/>
    <property type="match status" value="1"/>
</dbReference>
<dbReference type="FunFam" id="1.20.200.10:FF:000015">
    <property type="entry name" value="argininosuccinate lyase isoform X2"/>
    <property type="match status" value="1"/>
</dbReference>
<dbReference type="Gene3D" id="1.10.40.30">
    <property type="entry name" value="Fumarase/aspartase (C-terminal domain)"/>
    <property type="match status" value="1"/>
</dbReference>
<dbReference type="Gene3D" id="1.20.200.10">
    <property type="entry name" value="Fumarase/aspartase (Central domain)"/>
    <property type="match status" value="1"/>
</dbReference>
<dbReference type="Gene3D" id="1.10.275.10">
    <property type="entry name" value="Fumarase/aspartase (N-terminal domain)"/>
    <property type="match status" value="1"/>
</dbReference>
<dbReference type="HAMAP" id="MF_00006">
    <property type="entry name" value="Arg_succ_lyase"/>
    <property type="match status" value="1"/>
</dbReference>
<dbReference type="InterPro" id="IPR029419">
    <property type="entry name" value="Arg_succ_lyase_C"/>
</dbReference>
<dbReference type="InterPro" id="IPR009049">
    <property type="entry name" value="Argininosuccinate_lyase"/>
</dbReference>
<dbReference type="InterPro" id="IPR024083">
    <property type="entry name" value="Fumarase/histidase_N"/>
</dbReference>
<dbReference type="InterPro" id="IPR020557">
    <property type="entry name" value="Fumarate_lyase_CS"/>
</dbReference>
<dbReference type="InterPro" id="IPR000362">
    <property type="entry name" value="Fumarate_lyase_fam"/>
</dbReference>
<dbReference type="InterPro" id="IPR022761">
    <property type="entry name" value="Fumarate_lyase_N"/>
</dbReference>
<dbReference type="InterPro" id="IPR008948">
    <property type="entry name" value="L-Aspartase-like"/>
</dbReference>
<dbReference type="NCBIfam" id="TIGR00838">
    <property type="entry name" value="argH"/>
    <property type="match status" value="1"/>
</dbReference>
<dbReference type="PANTHER" id="PTHR43814">
    <property type="entry name" value="ARGININOSUCCINATE LYASE"/>
    <property type="match status" value="1"/>
</dbReference>
<dbReference type="PANTHER" id="PTHR43814:SF1">
    <property type="entry name" value="ARGININOSUCCINATE LYASE"/>
    <property type="match status" value="1"/>
</dbReference>
<dbReference type="Pfam" id="PF14698">
    <property type="entry name" value="ASL_C2"/>
    <property type="match status" value="1"/>
</dbReference>
<dbReference type="Pfam" id="PF00206">
    <property type="entry name" value="Lyase_1"/>
    <property type="match status" value="1"/>
</dbReference>
<dbReference type="PRINTS" id="PR00145">
    <property type="entry name" value="ARGSUCLYASE"/>
</dbReference>
<dbReference type="PRINTS" id="PR00149">
    <property type="entry name" value="FUMRATELYASE"/>
</dbReference>
<dbReference type="SUPFAM" id="SSF48557">
    <property type="entry name" value="L-aspartase-like"/>
    <property type="match status" value="1"/>
</dbReference>
<dbReference type="PROSITE" id="PS00163">
    <property type="entry name" value="FUMARATE_LYASES"/>
    <property type="match status" value="1"/>
</dbReference>
<organism>
    <name type="scientific">Sphingopyxis alaskensis (strain DSM 13593 / LMG 18877 / RB2256)</name>
    <name type="common">Sphingomonas alaskensis</name>
    <dbReference type="NCBI Taxonomy" id="317655"/>
    <lineage>
        <taxon>Bacteria</taxon>
        <taxon>Pseudomonadati</taxon>
        <taxon>Pseudomonadota</taxon>
        <taxon>Alphaproteobacteria</taxon>
        <taxon>Sphingomonadales</taxon>
        <taxon>Sphingomonadaceae</taxon>
        <taxon>Sphingopyxis</taxon>
    </lineage>
</organism>
<protein>
    <recommendedName>
        <fullName evidence="1">Argininosuccinate lyase</fullName>
        <shortName evidence="1">ASAL</shortName>
        <ecNumber evidence="1">4.3.2.1</ecNumber>
    </recommendedName>
    <alternativeName>
        <fullName evidence="1">Arginosuccinase</fullName>
    </alternativeName>
</protein>
<sequence>MANTPDKSSMWGGRFGGGPAAIMQEINASIPIDKRLWEEDIAASRAHAAMLGACRIISADDAAAIDRGLAQIAEEFAENGVPVDLSLEDIHMTVEARLKELIGEPAGRLHTARSRNDQVATDFRLWTRTACERIDAGLAALQSALLQRADEHADSIMPGFTHLQVAQPVTLGHHLLAYVEMARRDRGRFADARRRLNESPLGAAALAGTGFPVDRDATAAALGFDRPMANSIDAVSDRDFALEFCAAAAIAAIHLSRLAEEIVIWASQPFGFVALPDAWSTGSSIMPQKRNPDAAELVRGRAGLLLGAFQRLAVIVKGLPLTYSKDLQDDKETLFGAFDALALSLAAMTGMVETLSFRTDRMRALAASGYSTATDLADWLVREAGLPFREAHHVVGACVRRAEELGVELPALPAADAAAIHAAVTPDVLAALTVEASVASRMSYGGTAPERVRQAIAAARAAAAQGQD</sequence>